<proteinExistence type="evidence at transcript level"/>
<reference key="1">
    <citation type="journal article" date="1994" name="Virology">
        <title>Species specificity and interspecies relatedness in VP4 genotypes demonstrated by VP4 sequence analysis of equine, feline, and canine rotavirus strains.</title>
        <authorList>
            <person name="Taniguchi K."/>
            <person name="Urasawa T."/>
            <person name="Urasawa S."/>
        </authorList>
    </citation>
    <scope>NUCLEOTIDE SEQUENCE [MRNA]</scope>
</reference>
<reference key="2">
    <citation type="journal article" date="1993" name="J. Gen. Virol.">
        <title>A new serotype of the outer capsid protein VP4 shared by an unusual human rotavirus strain Ro1845 and canine rotaviruses.</title>
        <authorList>
            <person name="Isegawa Y."/>
            <person name="Nakagomi O."/>
            <person name="Hoshino Y."/>
            <person name="Aboudy Y."/>
            <person name="Shif I."/>
            <person name="Silberstein I."/>
            <person name="Nakagomi T."/>
            <person name="Ueda S."/>
            <person name="Sears J."/>
            <person name="Flores J."/>
        </authorList>
    </citation>
    <scope>NUCLEOTIDE SEQUENCE [MRNA]</scope>
</reference>
<reference key="3">
    <citation type="journal article" date="2002" name="J. Virol.">
        <title>Initial interaction of rotavirus strains with N-acetylneuraminic (sialic) acid residues on the cell surface correlates with VP4 genotype, not species of origin.</title>
        <authorList>
            <person name="Ciarlet M."/>
            <person name="Ludert J.E."/>
            <person name="Iturriza-Gomara M."/>
            <person name="Liprandi F."/>
            <person name="Gray J.J."/>
            <person name="Desselberger U."/>
            <person name="Estes M.K."/>
        </authorList>
    </citation>
    <scope>SIALIC ACID DEPENDENCY</scope>
</reference>
<reference key="4">
    <citation type="journal article" date="2006" name="Glycoconj. J.">
        <title>Role of sialic acids in rotavirus infection.</title>
        <authorList>
            <person name="Isa P."/>
            <person name="Arias C.F."/>
            <person name="Lopez S."/>
        </authorList>
    </citation>
    <scope>REVIEW</scope>
</reference>
<organism>
    <name type="scientific">Rotavirus A (isolate RVA/Dog/United States/Cu-1/1982/G3P5A[3])</name>
    <name type="common">RV-A</name>
    <dbReference type="NCBI Taxonomy" id="101357"/>
    <lineage>
        <taxon>Viruses</taxon>
        <taxon>Riboviria</taxon>
        <taxon>Orthornavirae</taxon>
        <taxon>Duplornaviricota</taxon>
        <taxon>Resentoviricetes</taxon>
        <taxon>Reovirales</taxon>
        <taxon>Sedoreoviridae</taxon>
        <taxon>Rotavirus</taxon>
        <taxon>Rotavirus A</taxon>
    </lineage>
</organism>
<protein>
    <recommendedName>
        <fullName evidence="1">Outer capsid protein VP4</fullName>
    </recommendedName>
    <alternativeName>
        <fullName evidence="1">Hemagglutinin</fullName>
    </alternativeName>
    <component>
        <recommendedName>
            <fullName evidence="1">Outer capsid protein VP8*</fullName>
        </recommendedName>
    </component>
    <component>
        <recommendedName>
            <fullName evidence="1">Outer capsid protein VP5*</fullName>
        </recommendedName>
    </component>
</protein>
<accession>Q98637</accession>
<accession>Q86170</accession>
<comment type="function">
    <molecule>Outer capsid protein VP4</molecule>
    <text evidence="1">Spike-forming protein that mediates virion attachment to the host epithelial cell receptors and plays a major role in cell penetration, determination of host range restriction and virulence. Rotavirus attachment and entry into the host cell probably involves multiple sequential contacts between the outer capsid proteins VP4 and VP7, and the cell receptors. It is subsequently lost, together with VP7, following virus entry into the host cell. Following entry into the host cell, low intracellular or intravesicular Ca(2+) concentration probably causes the calcium-stabilized VP7 trimers to dissociate from the virion. This step is probably necessary for the membrane-disrupting entry step and the release of VP4, which is locked onto the virion by VP7. During the virus exit from the host cell, VP4 seems to be required to target the newly formed virions to the host cell lipid rafts.</text>
</comment>
<comment type="function">
    <molecule>Outer capsid protein VP5*</molecule>
    <text evidence="1">Forms the spike 'foot' and 'body' and acts as a membrane permeabilization protein that mediates release of viral particles from endosomal compartments into the cytoplasm. During entry, the part of VP5* that protrudes from the virus folds back on itself and reorganizes from a local dimer to a trimer. This reorganization may be linked to membrane penetration by exposing VP5* hydrophobic region. In integrin-dependent strains, VP5* targets the integrin heterodimer ITGA2/ITGB1 for cell attachment.</text>
</comment>
<comment type="function">
    <molecule>Outer capsid protein VP8*</molecule>
    <text evidence="1">Forms the head of the spikes and mediates the recognition of specific host cell surface glycans. It is the viral hemagglutinin and an important target of neutralizing antibodies. In sialic acid-dependent strains, VP8* binds to host cell sialic acid, most probably a ganglioside, providing the initial contact. In some other strains, VP8* mediates the attachment to histo-blood group antigens (HBGAs) for viral entry.</text>
</comment>
<comment type="subunit">
    <molecule>Outer capsid protein VP4</molecule>
    <text evidence="1">Homotrimer. VP4 adopts a dimeric appearance above the capsid surface, while forming a trimeric base anchored inside the capsid layer. Only hints of the third molecule are observed above the capsid surface. It probably performs a series of molecular rearrangements during viral entry. Prior to trypsin cleavage, it is flexible. The priming trypsin cleavage triggers its rearrangement into rigid spikes with approximate two-fold symmetry of their protruding parts. After an unknown second triggering event, cleaved VP4 may undergo another rearrangement, in which two VP5* subunits fold back on themselves and join a third subunit to form a tightly associated trimer, shaped like a folded umbrella. Interacts with VP6. Interacts with VP7.</text>
</comment>
<comment type="subunit">
    <molecule>Outer capsid protein VP5*</molecule>
    <text evidence="1">Homotrimer. The trimer is coiled-coil stabilized by its C-terminus, however, its N-terminus, known as antigen domain or 'body', seems to be flexible allowing it to self-associate either as a dimer or a trimer.</text>
</comment>
<comment type="subcellular location">
    <molecule>Outer capsid protein VP4</molecule>
    <subcellularLocation>
        <location evidence="1">Virion</location>
    </subcellularLocation>
    <subcellularLocation>
        <location evidence="1">Host rough endoplasmic reticulum</location>
    </subcellularLocation>
    <subcellularLocation>
        <location evidence="1">Host cell membrane</location>
    </subcellularLocation>
    <subcellularLocation>
        <location evidence="1">Host cytoplasm</location>
        <location evidence="1">Host cytoskeleton</location>
    </subcellularLocation>
    <subcellularLocation>
        <location evidence="1">Host endoplasmic reticulum-Golgi intermediate compartment</location>
    </subcellularLocation>
    <text evidence="1">The outer layer contains 180 copies of VP4, grouped as 60 dimers. Immature double-layered particles assembled in the cytoplasm bud across the membrane of the endoplasmic reticulum, acquiring during this process a transient lipid membrane that is modified with the ER resident viral glycoproteins NSP4 and VP7; these enveloped particles also contain VP4. As the particles move towards the interior of the ER cisternae, the transient lipid membrane and the non-structural protein NSP4 are lost, while the virus surface proteins VP4 and VP7 rearrange to form the outermost virus protein layer, yielding mature infectious triple-layered particles. VP4 also seems to associate with lipid rafts of the host cell membrane probably for the exit of the virus from the infected cell by an alternate pathway.</text>
</comment>
<comment type="subcellular location">
    <molecule>Outer capsid protein VP8*</molecule>
    <subcellularLocation>
        <location evidence="1">Virion</location>
    </subcellularLocation>
    <text evidence="1">Outer capsid protein.</text>
</comment>
<comment type="subcellular location">
    <molecule>Outer capsid protein VP5*</molecule>
    <subcellularLocation>
        <location evidence="1">Virion</location>
    </subcellularLocation>
    <text evidence="1">Outer capsid protein.</text>
</comment>
<comment type="domain">
    <molecule>Outer capsid protein VP4</molecule>
    <text evidence="1">The VP4 spike is divided into a foot, a stalk and body, and a head.</text>
</comment>
<comment type="PTM">
    <molecule>Outer capsid protein VP4</molecule>
    <text evidence="1">Proteolytic cleavage by trypsin results in activation of VP4 functions and greatly increases infectivity. The penetration into the host cell is dependent on trypsin treatment of VP4. It produces two peptides, VP5* and VP8* that remain associated with the virion. Cleavage of VP4 by trypsin probably occurs in vivo in the lumen of the intestine prior to infection of enterocytes. Trypsin seems to be incorporated into the three-layered viral particles but remains inactive as long as the viral outer capsid is intact and would only be activated upon the solubilization of the latter.</text>
</comment>
<comment type="miscellaneous">
    <text evidence="1">In group A rotaviruses, VP4 defines the P serotype.</text>
</comment>
<comment type="miscellaneous">
    <text evidence="1">Some rotavirus strains are neuraminidase-sensitive and require sialic acid to attach to the cell surface. Some rotavirus strains are integrin-dependent. Some rotavirus strains depend on ganglioside for their entry into the host cell. Hsp70 also seems to be involved in the entry of some strains.</text>
</comment>
<comment type="miscellaneous">
    <text evidence="1 2 3">This strain probably uses sialic acid to attach to the host cell.</text>
</comment>
<comment type="similarity">
    <text evidence="1">Belongs to the rotavirus VP4 family.</text>
</comment>
<organismHost>
    <name type="scientific">Canis lupus familiaris</name>
    <name type="common">Dog</name>
    <name type="synonym">Canis familiaris</name>
    <dbReference type="NCBI Taxonomy" id="9615"/>
</organismHost>
<dbReference type="EMBL" id="D13401">
    <property type="protein sequence ID" value="BAA02665.1"/>
    <property type="molecule type" value="mRNA"/>
</dbReference>
<dbReference type="EMBL" id="L20876">
    <property type="protein sequence ID" value="AAA47294.1"/>
    <property type="molecule type" value="mRNA"/>
</dbReference>
<dbReference type="SMR" id="Q98637"/>
<dbReference type="GO" id="GO:0044172">
    <property type="term" value="C:host cell endoplasmic reticulum-Golgi intermediate compartment"/>
    <property type="evidence" value="ECO:0007669"/>
    <property type="project" value="UniProtKB-SubCell"/>
</dbReference>
<dbReference type="GO" id="GO:0020002">
    <property type="term" value="C:host cell plasma membrane"/>
    <property type="evidence" value="ECO:0007669"/>
    <property type="project" value="UniProtKB-SubCell"/>
</dbReference>
<dbReference type="GO" id="GO:0044168">
    <property type="term" value="C:host cell rough endoplasmic reticulum"/>
    <property type="evidence" value="ECO:0007669"/>
    <property type="project" value="UniProtKB-SubCell"/>
</dbReference>
<dbReference type="GO" id="GO:0044163">
    <property type="term" value="C:host cytoskeleton"/>
    <property type="evidence" value="ECO:0007669"/>
    <property type="project" value="UniProtKB-SubCell"/>
</dbReference>
<dbReference type="GO" id="GO:0016020">
    <property type="term" value="C:membrane"/>
    <property type="evidence" value="ECO:0007669"/>
    <property type="project" value="UniProtKB-KW"/>
</dbReference>
<dbReference type="GO" id="GO:0039624">
    <property type="term" value="C:viral outer capsid"/>
    <property type="evidence" value="ECO:0007669"/>
    <property type="project" value="UniProtKB-UniRule"/>
</dbReference>
<dbReference type="GO" id="GO:0039665">
    <property type="term" value="P:permeabilization of host organelle membrane involved in viral entry into host cell"/>
    <property type="evidence" value="ECO:0007669"/>
    <property type="project" value="UniProtKB-UniRule"/>
</dbReference>
<dbReference type="GO" id="GO:0019062">
    <property type="term" value="P:virion attachment to host cell"/>
    <property type="evidence" value="ECO:0007669"/>
    <property type="project" value="UniProtKB-UniRule"/>
</dbReference>
<dbReference type="Gene3D" id="1.20.5.170">
    <property type="match status" value="1"/>
</dbReference>
<dbReference type="Gene3D" id="2.60.120.200">
    <property type="match status" value="1"/>
</dbReference>
<dbReference type="HAMAP" id="MF_04132">
    <property type="entry name" value="Rota_A_VP4"/>
    <property type="match status" value="1"/>
</dbReference>
<dbReference type="HAMAP" id="MF_04125">
    <property type="entry name" value="Rota_VP4"/>
    <property type="match status" value="1"/>
</dbReference>
<dbReference type="InterPro" id="IPR013320">
    <property type="entry name" value="ConA-like_dom_sf"/>
</dbReference>
<dbReference type="InterPro" id="IPR042546">
    <property type="entry name" value="Rota_A_VP4"/>
</dbReference>
<dbReference type="InterPro" id="IPR035330">
    <property type="entry name" value="Rota_VP4_MID"/>
</dbReference>
<dbReference type="InterPro" id="IPR038017">
    <property type="entry name" value="Rota_VP4_MID_sf"/>
</dbReference>
<dbReference type="InterPro" id="IPR000416">
    <property type="entry name" value="VP4_concanavalin-like"/>
</dbReference>
<dbReference type="InterPro" id="IPR035329">
    <property type="entry name" value="VP4_helical"/>
</dbReference>
<dbReference type="Pfam" id="PF17477">
    <property type="entry name" value="Rota_VP4_MID"/>
    <property type="match status" value="1"/>
</dbReference>
<dbReference type="Pfam" id="PF00426">
    <property type="entry name" value="VP4_haemagglut"/>
    <property type="match status" value="1"/>
</dbReference>
<dbReference type="Pfam" id="PF17478">
    <property type="entry name" value="VP4_helical"/>
    <property type="match status" value="1"/>
</dbReference>
<dbReference type="SUPFAM" id="SSF49899">
    <property type="entry name" value="Concanavalin A-like lectins/glucanases"/>
    <property type="match status" value="1"/>
</dbReference>
<dbReference type="SUPFAM" id="SSF111379">
    <property type="entry name" value="VP4 membrane interaction domain"/>
    <property type="match status" value="1"/>
</dbReference>
<feature type="chain" id="PRO_0000368098" description="Outer capsid protein VP4" evidence="1">
    <location>
        <begin position="1"/>
        <end position="776"/>
    </location>
</feature>
<feature type="chain" id="PRO_0000368099" description="Outer capsid protein VP8*" evidence="1">
    <location>
        <begin position="1"/>
        <end position="231"/>
    </location>
</feature>
<feature type="chain" id="PRO_0000368100" description="Outer capsid protein VP5*" evidence="1">
    <location>
        <begin position="248"/>
        <end position="776"/>
    </location>
</feature>
<feature type="region of interest" description="Spike head" evidence="1">
    <location>
        <begin position="65"/>
        <end position="224"/>
    </location>
</feature>
<feature type="region of interest" description="Spike body and stalk (antigen domain)" evidence="1">
    <location>
        <begin position="248"/>
        <end position="479"/>
    </location>
</feature>
<feature type="region of interest" description="Hydrophobic; possible role in virus entry into host cell" evidence="1">
    <location>
        <begin position="389"/>
        <end position="409"/>
    </location>
</feature>
<feature type="region of interest" description="Spike foot" evidence="1">
    <location>
        <begin position="510"/>
        <end position="776"/>
    </location>
</feature>
<feature type="coiled-coil region" evidence="1">
    <location>
        <begin position="484"/>
        <end position="511"/>
    </location>
</feature>
<feature type="short sequence motif" description="DGE motif; interaction with ITGA2/ITGB1 heterodimer" evidence="1">
    <location>
        <begin position="308"/>
        <end position="310"/>
    </location>
</feature>
<feature type="short sequence motif" description="YGL motif; interaction with ITGA4" evidence="1">
    <location>
        <begin position="448"/>
        <end position="450"/>
    </location>
</feature>
<feature type="short sequence motif" description="KID motif; interaction with HSPA8" evidence="1">
    <location>
        <begin position="644"/>
        <end position="646"/>
    </location>
</feature>
<feature type="site" description="Binding to sialic acid" evidence="1">
    <location>
        <position position="101"/>
    </location>
</feature>
<feature type="site" description="Binding to sialic acid" evidence="1">
    <location>
        <position position="190"/>
    </location>
</feature>
<feature type="site" description="Cleavage" evidence="1">
    <location>
        <begin position="231"/>
        <end position="232"/>
    </location>
</feature>
<feature type="site" description="Cleavage" evidence="1">
    <location>
        <begin position="241"/>
        <end position="242"/>
    </location>
</feature>
<feature type="site" description="Cleavage; associated with enhancement of infectivity" evidence="1">
    <location>
        <begin position="247"/>
        <end position="248"/>
    </location>
</feature>
<feature type="disulfide bond" evidence="1">
    <location>
        <begin position="203"/>
        <end position="216"/>
    </location>
</feature>
<feature type="disulfide bond" evidence="1">
    <location>
        <begin position="318"/>
        <end position="380"/>
    </location>
</feature>
<feature type="sequence conflict" description="In Ref. 2; AAA47294." evidence="4" ref="2">
    <original>T</original>
    <variation>S</variation>
    <location>
        <position position="113"/>
    </location>
</feature>
<feature type="sequence conflict" description="In Ref. 2; AAA47294." evidence="4" ref="2">
    <original>N</original>
    <variation>D</variation>
    <location>
        <position position="242"/>
    </location>
</feature>
<feature type="sequence conflict" description="In Ref. 2; AAA47294." evidence="4" ref="2">
    <original>LL</original>
    <variation>FV</variation>
    <location>
        <begin position="337"/>
        <end position="338"/>
    </location>
</feature>
<feature type="sequence conflict" description="In Ref. 2; AAA47294." evidence="4" ref="2">
    <original>H</original>
    <variation>D</variation>
    <location>
        <position position="384"/>
    </location>
</feature>
<feature type="sequence conflict" description="In Ref. 2; AAA47294." evidence="4" ref="2">
    <original>ST</original>
    <variation>GI</variation>
    <location>
        <begin position="685"/>
        <end position="686"/>
    </location>
</feature>
<feature type="sequence conflict" description="In Ref. 2; AAA47294." evidence="4" ref="2">
    <original>M</original>
    <variation>I</variation>
    <location>
        <position position="772"/>
    </location>
</feature>
<name>VP4_ROTCU</name>
<evidence type="ECO:0000255" key="1">
    <source>
        <dbReference type="HAMAP-Rule" id="MF_04132"/>
    </source>
</evidence>
<evidence type="ECO:0000269" key="2">
    <source>
    </source>
</evidence>
<evidence type="ECO:0000303" key="3">
    <source>
    </source>
</evidence>
<evidence type="ECO:0000305" key="4"/>
<keyword id="KW-0167">Capsid protein</keyword>
<keyword id="KW-0175">Coiled coil</keyword>
<keyword id="KW-1015">Disulfide bond</keyword>
<keyword id="KW-0348">Hemagglutinin</keyword>
<keyword id="KW-1032">Host cell membrane</keyword>
<keyword id="KW-1035">Host cytoplasm</keyword>
<keyword id="KW-1037">Host cytoskeleton</keyword>
<keyword id="KW-1038">Host endoplasmic reticulum</keyword>
<keyword id="KW-1043">Host membrane</keyword>
<keyword id="KW-0945">Host-virus interaction</keyword>
<keyword id="KW-0472">Membrane</keyword>
<keyword id="KW-1152">Outer capsid protein</keyword>
<keyword id="KW-1161">Viral attachment to host cell</keyword>
<keyword id="KW-1162">Viral penetration into host cytoplasm</keyword>
<keyword id="KW-1173">Viral penetration via permeabilization of host membrane</keyword>
<keyword id="KW-0946">Virion</keyword>
<keyword id="KW-1160">Virus entry into host cell</keyword>
<sequence>MASLIYRQLLTNSYTVNLSDEIQEIGSTKTQNITINPGPFAQTGYAPVNWGPGETNDSTTIEPVLDGPYQPTSFNPPVGYWMLLSPTAPGVVVEGTNNTDRWLATILIEPNVTSQQRTYTIFGVQEQITVENTSQTQWRFVDVSKTTQNGSYSQYSPLLSTPKLYAVMKYGGRIHTYSGQTPNATTGYYSATNYDSVNMTTFCDFYIIPRSEESKCTEYINNGLPPIQNTRNIIPLALSARNVRSLKAQSNEDIVVSKTSLWKEMQYNRDITIRFKFANSIVKSGGLGYKWSEISFKPANYQYTYMRDGEEVTAHTTCSVNGMNDFSFNGGSLPTDLLISRYEVIKENSYVYIDYWDDSQAFRNMVYVRSLAANLNSVICAGGHYNFALPVGQWPYMTGGAVSLHSAGVTLSTQFTDFVSLNSLRFRFRLAVEEPSFAIMRTRVSGLYGLPAANPNNGREYYEIAGRFSLISLIPSNDNYQTPIANSVTVRQDLERQLGELREEFNALSQEIAMSQLIDLALLPLDMFSMFSGIKSTIDAAKSIATNVMKKFKKSSLASSVSTLTDSLSDAASSLSRGSSIRSVGSSVSAWTDVSTQITDVSSSVSSISTQTSTISRRLRLKEMATQTEGMNFDDISAAVLKTKIDKSIQISPNTLPDIVTEASEKFIPNRAYRVINNDEVFEASTDGRFFAYRVDTFEEIPFDVQKFADLVTDSPVISAIIDFKTLKNLNDNYGIGKQQAFNLLRSDPKVLREFINQNNPIIRNRIEQLIMQCRL</sequence>